<name>TX1A_CHEPU</name>
<comment type="function">
    <text evidence="3 4">Spider venom toxin that exhibits cytolytic activity by forming an alpha-helix across the membrane (PubMed:20657014). Lethal to insect larvae (PubMed:20657014, PubMed:24717175). Causes instant paralysis and death in the larvae of the flesh fly (S.carnaria) at doses of 20 ug/g, at doses of less than 10 ug/g causes reversible paralysis (PubMed:20657014). Has cytolytic activity against insect Sf9 cells (PubMed:20657014). Causes stable and irreversible depolarization of fly muscle fibers, leading to contracture at higher toxin concentrations (PubMed:20657014). Destabilizes membranes (PubMed:20657014).</text>
</comment>
<comment type="subcellular location">
    <subcellularLocation>
        <location evidence="3">Secreted</location>
    </subcellularLocation>
    <subcellularLocation>
        <location evidence="3">Target cell membrane</location>
    </subcellularLocation>
    <text>Probably forms a transmembrane alpha-helix in the target cell membrane.</text>
</comment>
<comment type="tissue specificity">
    <text evidence="3">Expressed by the venom gland.</text>
</comment>
<comment type="domain">
    <text evidence="7">The presence of 'disulfide through disulfide knots' structurally defines this protein as a knottin. This toxin contains 2 'disulfide through disulfide knots' that are separated by a short linker.</text>
</comment>
<comment type="PTM">
    <text evidence="5 6">Cleavage of the propeptide depends on the processing quadruplet motif (XXXR, with at least one of X being E).</text>
</comment>
<comment type="toxic dose">
    <text evidence="3">LD(50) is 10 ug/g on S.carnaria larvae.</text>
</comment>
<comment type="similarity">
    <text evidence="7">Belongs to the neurotoxin 19 (CSTX) family. Double-CSTX subfamily.</text>
</comment>
<comment type="caution">
    <text evidence="8">Characterization of function and toxicity was performed using CpTx1, a mixture of DELTA-miturgitoxin-Cp1a, DELTA-miturgitoxin-Cp1b and DELTA-miturgitoxin-Cp1c. While it is assumed that all three are active current data cannot prove this.</text>
</comment>
<keyword id="KW-0027">Amidation</keyword>
<keyword id="KW-0204">Cytolysis</keyword>
<keyword id="KW-0903">Direct protein sequencing</keyword>
<keyword id="KW-1015">Disulfide bond</keyword>
<keyword id="KW-0960">Knottin</keyword>
<keyword id="KW-0472">Membrane</keyword>
<keyword id="KW-0528">Neurotoxin</keyword>
<keyword id="KW-0677">Repeat</keyword>
<keyword id="KW-0964">Secreted</keyword>
<keyword id="KW-0732">Signal</keyword>
<keyword id="KW-1052">Target cell membrane</keyword>
<keyword id="KW-1053">Target membrane</keyword>
<keyword id="KW-0800">Toxin</keyword>
<keyword id="KW-0812">Transmembrane</keyword>
<organism>
    <name type="scientific">Cheiracanthium punctorium</name>
    <name type="common">Yellow sac spider</name>
    <name type="synonym">Aranea punctoria</name>
    <dbReference type="NCBI Taxonomy" id="682790"/>
    <lineage>
        <taxon>Eukaryota</taxon>
        <taxon>Metazoa</taxon>
        <taxon>Ecdysozoa</taxon>
        <taxon>Arthropoda</taxon>
        <taxon>Chelicerata</taxon>
        <taxon>Arachnida</taxon>
        <taxon>Araneae</taxon>
        <taxon>Araneomorphae</taxon>
        <taxon>Entelegynae</taxon>
        <taxon>Entelegynae incertae sedis</taxon>
        <taxon>Cheiracanthiidae</taxon>
        <taxon>Cheiracanthium</taxon>
    </lineage>
</organism>
<reference evidence="7 9" key="1">
    <citation type="journal article" date="2010" name="J. Biol. Chem.">
        <title>Novel class of spider toxin: active principle from the yellow sac spider Cheiracanthium punctorium venom is a unique two-domain polypeptide.</title>
        <authorList>
            <person name="Vassilevski A.A."/>
            <person name="Fedorova I.M."/>
            <person name="Maleeva E.E."/>
            <person name="Korolkova Y.V."/>
            <person name="Efimova S.S."/>
            <person name="Samsonova O.V."/>
            <person name="Schagina L.V."/>
            <person name="Feofanov A.V."/>
            <person name="Magazanik L.G."/>
            <person name="Grishin E.V."/>
        </authorList>
    </citation>
    <scope>NUCLEOTIDE SEQUENCE [MRNA]</scope>
    <scope>PROTEIN SEQUENCE OF 48-181</scope>
    <scope>FUNCTION</scope>
    <scope>SUBCELLULAR LOCATION</scope>
    <scope>TISSUE SPECIFICITY</scope>
    <scope>TOXIC DOSE</scope>
    <scope>PQM MOTIF</scope>
    <scope>AMIDATION AT TRP-181</scope>
    <source>
        <tissue evidence="3">Venom</tissue>
        <tissue evidence="9">Venom gland</tissue>
    </source>
</reference>
<reference key="2">
    <citation type="journal article" date="2012" name="J. Biol. Chem.">
        <title>A venom-derived neurotoxin, CsTx-1, from the spider Cupiennius salei exhibits cytolytic activities.</title>
        <authorList>
            <person name="Kuhn-Nentwig L."/>
            <person name="Fedorova I.M."/>
            <person name="Luscher B.P."/>
            <person name="Kopp L.S."/>
            <person name="Trachsel C."/>
            <person name="Schaller J."/>
            <person name="Vu X.L."/>
            <person name="Seebeck T."/>
            <person name="Streitberger K."/>
            <person name="Nentwig W."/>
            <person name="Sigel E."/>
            <person name="Magazanik L.G."/>
        </authorList>
    </citation>
    <scope>ALPHA-HELICAL REGION</scope>
</reference>
<reference evidence="7" key="3">
    <citation type="journal article" date="2014" name="Insect Mol. Biol.">
        <title>Structure of the yellow sac spider Cheiracanthium punctorium genes provides clues to evolution of insecticidal two-domain knottin toxins.</title>
        <authorList>
            <person name="Sachkova M.Y."/>
            <person name="Slavokhotova A.A."/>
            <person name="Grishin E.V."/>
            <person name="Vassilevski A.A."/>
        </authorList>
    </citation>
    <scope>PROTEIN SEQUENCE OF 48-67</scope>
    <scope>IDENTIFICATION BY MASS SPECTROMETRY</scope>
    <scope>PQM MOTIF</scope>
    <source>
        <tissue evidence="6">Venom</tissue>
    </source>
</reference>
<protein>
    <recommendedName>
        <fullName evidence="7">DELTA-miturgitoxin-Cp1a</fullName>
        <shortName evidence="7">DELTA-MGTX-Cp1a</shortName>
    </recommendedName>
    <alternativeName>
        <fullName evidence="7">Double-knot toxin</fullName>
        <shortName evidence="7">DkTx</shortName>
    </alternativeName>
    <alternativeName>
        <fullName evidence="5">Toxin CpTx1</fullName>
    </alternativeName>
    <alternativeName>
        <fullName evidence="5 9">Toxin CpTx1a</fullName>
    </alternativeName>
</protein>
<sequence length="183" mass="20805">MKFSLFFSVFFLAVLHACLSESEIDLEDEEHFMSSDSFLSEIQDESRGKTCIERNKECTNDRHGCCRGKIFKDKCTCVKNGKTEKCVCTQKKWAKIIESYIGDIPALPKPVDDKCVPKHADCSKRKDDCCKGGIFKYQCKCYDMYDDDGEKTDLCGCVSPVEHQAIEGALRIAKKLIGDRWGR</sequence>
<feature type="signal peptide" evidence="2">
    <location>
        <begin position="1"/>
        <end position="20"/>
    </location>
</feature>
<feature type="propeptide" id="PRO_0000398810" evidence="2 3">
    <location>
        <begin position="21"/>
        <end position="47"/>
    </location>
</feature>
<feature type="chain" id="PRO_5000584953" description="DELTA-miturgitoxin-Cp1a" evidence="3">
    <location>
        <begin position="48"/>
        <end position="181"/>
    </location>
</feature>
<feature type="repeat" description="Domain 1" evidence="7">
    <location>
        <begin position="51"/>
        <end position="77"/>
    </location>
</feature>
<feature type="repeat" description="Domain 2" evidence="7">
    <location>
        <begin position="115"/>
        <end position="141"/>
    </location>
</feature>
<feature type="region of interest" description="2 X approximate repeats with cysteine pattern C-C-CC-C-C" evidence="7">
    <location>
        <begin position="51"/>
        <end position="141"/>
    </location>
</feature>
<feature type="region of interest" description="Predicted alpha-helix">
    <location>
        <begin position="164"/>
        <end position="177"/>
    </location>
</feature>
<feature type="short sequence motif" description="Processing quadruplet motif" evidence="5 6">
    <location>
        <begin position="44"/>
        <end position="47"/>
    </location>
</feature>
<feature type="modified residue" description="Tryptophan amide" evidence="3">
    <location>
        <position position="181"/>
    </location>
</feature>
<feature type="disulfide bond" evidence="1">
    <location>
        <begin position="51"/>
        <end position="66"/>
    </location>
</feature>
<feature type="disulfide bond" evidence="1">
    <location>
        <begin position="58"/>
        <end position="75"/>
    </location>
</feature>
<feature type="disulfide bond" evidence="1">
    <location>
        <begin position="65"/>
        <end position="88"/>
    </location>
</feature>
<feature type="disulfide bond" evidence="1">
    <location>
        <begin position="77"/>
        <end position="86"/>
    </location>
</feature>
<feature type="disulfide bond" evidence="1">
    <location>
        <begin position="115"/>
        <end position="130"/>
    </location>
</feature>
<feature type="disulfide bond" evidence="1">
    <location>
        <begin position="122"/>
        <end position="139"/>
    </location>
</feature>
<feature type="disulfide bond" evidence="1">
    <location>
        <begin position="129"/>
        <end position="157"/>
    </location>
</feature>
<feature type="disulfide bond" evidence="1">
    <location>
        <begin position="141"/>
        <end position="155"/>
    </location>
</feature>
<feature type="sequence conflict" description="In Ref. 1; CBH50808." evidence="7" ref="1">
    <original>F</original>
    <variation>L</variation>
    <location>
        <position position="10"/>
    </location>
</feature>
<feature type="sequence conflict" description="In Ref. 1; CBH50808." evidence="7" ref="1">
    <original>M</original>
    <variation>L</variation>
    <location>
        <position position="33"/>
    </location>
</feature>
<proteinExistence type="evidence at protein level"/>
<dbReference type="EMBL" id="FN594513">
    <property type="protein sequence ID" value="CBH50807.1"/>
    <property type="molecule type" value="mRNA"/>
</dbReference>
<dbReference type="EMBL" id="FN594514">
    <property type="protein sequence ID" value="CBH50808.1"/>
    <property type="molecule type" value="mRNA"/>
</dbReference>
<dbReference type="SMR" id="C0HKG7"/>
<dbReference type="GO" id="GO:0005576">
    <property type="term" value="C:extracellular region"/>
    <property type="evidence" value="ECO:0007669"/>
    <property type="project" value="UniProtKB-SubCell"/>
</dbReference>
<dbReference type="GO" id="GO:0016020">
    <property type="term" value="C:membrane"/>
    <property type="evidence" value="ECO:0007669"/>
    <property type="project" value="UniProtKB-KW"/>
</dbReference>
<dbReference type="GO" id="GO:0044218">
    <property type="term" value="C:other organism cell membrane"/>
    <property type="evidence" value="ECO:0007669"/>
    <property type="project" value="UniProtKB-KW"/>
</dbReference>
<dbReference type="GO" id="GO:0090729">
    <property type="term" value="F:toxin activity"/>
    <property type="evidence" value="ECO:0007669"/>
    <property type="project" value="UniProtKB-KW"/>
</dbReference>
<dbReference type="GO" id="GO:0031640">
    <property type="term" value="P:killing of cells of another organism"/>
    <property type="evidence" value="ECO:0007669"/>
    <property type="project" value="UniProtKB-KW"/>
</dbReference>
<dbReference type="InterPro" id="IPR019553">
    <property type="entry name" value="Spider_toxin_CSTX_knottin"/>
</dbReference>
<dbReference type="InterPro" id="IPR011142">
    <property type="entry name" value="Spider_toxin_CSTX_Knottin_CS"/>
</dbReference>
<dbReference type="Pfam" id="PF10530">
    <property type="entry name" value="Toxin_35"/>
    <property type="match status" value="2"/>
</dbReference>
<dbReference type="PROSITE" id="PS60029">
    <property type="entry name" value="SPIDER_CSTX"/>
    <property type="match status" value="2"/>
</dbReference>
<accession>C0HKG7</accession>
<accession>D5GSJ8</accession>
<accession>D5GSJ9</accession>
<accession>D7FBA1</accession>
<accession>D7FBA3</accession>
<accession>P86381</accession>
<accession>P86429</accession>
<accession>P86430</accession>
<evidence type="ECO:0000250" key="1">
    <source>
        <dbReference type="UniProtKB" id="P58604"/>
    </source>
</evidence>
<evidence type="ECO:0000255" key="2"/>
<evidence type="ECO:0000269" key="3">
    <source>
    </source>
</evidence>
<evidence type="ECO:0000269" key="4">
    <source>
    </source>
</evidence>
<evidence type="ECO:0000303" key="5">
    <source>
    </source>
</evidence>
<evidence type="ECO:0000303" key="6">
    <source>
    </source>
</evidence>
<evidence type="ECO:0000305" key="7"/>
<evidence type="ECO:0000305" key="8">
    <source>
    </source>
</evidence>
<evidence type="ECO:0000312" key="9">
    <source>
        <dbReference type="EMBL" id="CBH50807.1"/>
    </source>
</evidence>